<dbReference type="EC" id="1.3.1.98" evidence="1"/>
<dbReference type="EMBL" id="CP000359">
    <property type="protein sequence ID" value="ABF45927.1"/>
    <property type="molecule type" value="Genomic_DNA"/>
</dbReference>
<dbReference type="RefSeq" id="WP_011530761.1">
    <property type="nucleotide sequence ID" value="NC_008025.1"/>
</dbReference>
<dbReference type="SMR" id="Q1IXV7"/>
<dbReference type="STRING" id="319795.Dgeo_1632"/>
<dbReference type="KEGG" id="dge:Dgeo_1632"/>
<dbReference type="eggNOG" id="COG0812">
    <property type="taxonomic scope" value="Bacteria"/>
</dbReference>
<dbReference type="HOGENOM" id="CLU_035304_1_1_0"/>
<dbReference type="UniPathway" id="UPA00219"/>
<dbReference type="Proteomes" id="UP000002431">
    <property type="component" value="Chromosome"/>
</dbReference>
<dbReference type="GO" id="GO:0005829">
    <property type="term" value="C:cytosol"/>
    <property type="evidence" value="ECO:0007669"/>
    <property type="project" value="TreeGrafter"/>
</dbReference>
<dbReference type="GO" id="GO:0071949">
    <property type="term" value="F:FAD binding"/>
    <property type="evidence" value="ECO:0007669"/>
    <property type="project" value="InterPro"/>
</dbReference>
<dbReference type="GO" id="GO:0008762">
    <property type="term" value="F:UDP-N-acetylmuramate dehydrogenase activity"/>
    <property type="evidence" value="ECO:0007669"/>
    <property type="project" value="UniProtKB-UniRule"/>
</dbReference>
<dbReference type="GO" id="GO:0051301">
    <property type="term" value="P:cell division"/>
    <property type="evidence" value="ECO:0007669"/>
    <property type="project" value="UniProtKB-KW"/>
</dbReference>
<dbReference type="GO" id="GO:0071555">
    <property type="term" value="P:cell wall organization"/>
    <property type="evidence" value="ECO:0007669"/>
    <property type="project" value="UniProtKB-KW"/>
</dbReference>
<dbReference type="GO" id="GO:0009252">
    <property type="term" value="P:peptidoglycan biosynthetic process"/>
    <property type="evidence" value="ECO:0007669"/>
    <property type="project" value="UniProtKB-UniRule"/>
</dbReference>
<dbReference type="GO" id="GO:0008360">
    <property type="term" value="P:regulation of cell shape"/>
    <property type="evidence" value="ECO:0007669"/>
    <property type="project" value="UniProtKB-KW"/>
</dbReference>
<dbReference type="Gene3D" id="3.30.465.10">
    <property type="match status" value="1"/>
</dbReference>
<dbReference type="Gene3D" id="3.90.78.10">
    <property type="entry name" value="UDP-N-acetylenolpyruvoylglucosamine reductase, C-terminal domain"/>
    <property type="match status" value="1"/>
</dbReference>
<dbReference type="Gene3D" id="3.30.43.10">
    <property type="entry name" value="Uridine Diphospho-n-acetylenolpyruvylglucosamine Reductase, domain 2"/>
    <property type="match status" value="1"/>
</dbReference>
<dbReference type="HAMAP" id="MF_00037">
    <property type="entry name" value="MurB"/>
    <property type="match status" value="1"/>
</dbReference>
<dbReference type="InterPro" id="IPR016166">
    <property type="entry name" value="FAD-bd_PCMH"/>
</dbReference>
<dbReference type="InterPro" id="IPR036318">
    <property type="entry name" value="FAD-bd_PCMH-like_sf"/>
</dbReference>
<dbReference type="InterPro" id="IPR016167">
    <property type="entry name" value="FAD-bd_PCMH_sub1"/>
</dbReference>
<dbReference type="InterPro" id="IPR016169">
    <property type="entry name" value="FAD-bd_PCMH_sub2"/>
</dbReference>
<dbReference type="InterPro" id="IPR003170">
    <property type="entry name" value="MurB"/>
</dbReference>
<dbReference type="InterPro" id="IPR011601">
    <property type="entry name" value="MurB_C"/>
</dbReference>
<dbReference type="InterPro" id="IPR036635">
    <property type="entry name" value="MurB_C_sf"/>
</dbReference>
<dbReference type="InterPro" id="IPR006094">
    <property type="entry name" value="Oxid_FAD_bind_N"/>
</dbReference>
<dbReference type="NCBIfam" id="NF011245">
    <property type="entry name" value="PRK14651.1"/>
    <property type="match status" value="1"/>
</dbReference>
<dbReference type="PANTHER" id="PTHR21071">
    <property type="entry name" value="UDP-N-ACETYLENOLPYRUVOYLGLUCOSAMINE REDUCTASE"/>
    <property type="match status" value="1"/>
</dbReference>
<dbReference type="PANTHER" id="PTHR21071:SF4">
    <property type="entry name" value="UDP-N-ACETYLENOLPYRUVOYLGLUCOSAMINE REDUCTASE"/>
    <property type="match status" value="1"/>
</dbReference>
<dbReference type="Pfam" id="PF01565">
    <property type="entry name" value="FAD_binding_4"/>
    <property type="match status" value="1"/>
</dbReference>
<dbReference type="Pfam" id="PF02873">
    <property type="entry name" value="MurB_C"/>
    <property type="match status" value="1"/>
</dbReference>
<dbReference type="SUPFAM" id="SSF56176">
    <property type="entry name" value="FAD-binding/transporter-associated domain-like"/>
    <property type="match status" value="1"/>
</dbReference>
<dbReference type="SUPFAM" id="SSF56194">
    <property type="entry name" value="Uridine diphospho-N-Acetylenolpyruvylglucosamine reductase, MurB, C-terminal domain"/>
    <property type="match status" value="1"/>
</dbReference>
<dbReference type="PROSITE" id="PS51387">
    <property type="entry name" value="FAD_PCMH"/>
    <property type="match status" value="1"/>
</dbReference>
<reference key="1">
    <citation type="submission" date="2006-04" db="EMBL/GenBank/DDBJ databases">
        <title>Complete sequence of chromosome of Deinococcus geothermalis DSM 11300.</title>
        <authorList>
            <person name="Copeland A."/>
            <person name="Lucas S."/>
            <person name="Lapidus A."/>
            <person name="Barry K."/>
            <person name="Detter J.C."/>
            <person name="Glavina del Rio T."/>
            <person name="Hammon N."/>
            <person name="Israni S."/>
            <person name="Dalin E."/>
            <person name="Tice H."/>
            <person name="Pitluck S."/>
            <person name="Brettin T."/>
            <person name="Bruce D."/>
            <person name="Han C."/>
            <person name="Tapia R."/>
            <person name="Saunders E."/>
            <person name="Gilna P."/>
            <person name="Schmutz J."/>
            <person name="Larimer F."/>
            <person name="Land M."/>
            <person name="Hauser L."/>
            <person name="Kyrpides N."/>
            <person name="Kim E."/>
            <person name="Daly M.J."/>
            <person name="Fredrickson J.K."/>
            <person name="Makarova K.S."/>
            <person name="Gaidamakova E.K."/>
            <person name="Zhai M."/>
            <person name="Richardson P."/>
        </authorList>
    </citation>
    <scope>NUCLEOTIDE SEQUENCE [LARGE SCALE GENOMIC DNA]</scope>
    <source>
        <strain>DSM 11300 / CIP 105573 / AG-3a</strain>
    </source>
</reference>
<name>MURB_DEIGD</name>
<evidence type="ECO:0000255" key="1">
    <source>
        <dbReference type="HAMAP-Rule" id="MF_00037"/>
    </source>
</evidence>
<feature type="chain" id="PRO_0000332456" description="UDP-N-acetylenolpyruvoylglucosamine reductase">
    <location>
        <begin position="1"/>
        <end position="295"/>
    </location>
</feature>
<feature type="domain" description="FAD-binding PCMH-type" evidence="1">
    <location>
        <begin position="27"/>
        <end position="194"/>
    </location>
</feature>
<feature type="active site" evidence="1">
    <location>
        <position position="174"/>
    </location>
</feature>
<feature type="active site" description="Proton donor" evidence="1">
    <location>
        <position position="221"/>
    </location>
</feature>
<feature type="active site" evidence="1">
    <location>
        <position position="287"/>
    </location>
</feature>
<comment type="function">
    <text evidence="1">Cell wall formation.</text>
</comment>
<comment type="catalytic activity">
    <reaction evidence="1">
        <text>UDP-N-acetyl-alpha-D-muramate + NADP(+) = UDP-N-acetyl-3-O-(1-carboxyvinyl)-alpha-D-glucosamine + NADPH + H(+)</text>
        <dbReference type="Rhea" id="RHEA:12248"/>
        <dbReference type="ChEBI" id="CHEBI:15378"/>
        <dbReference type="ChEBI" id="CHEBI:57783"/>
        <dbReference type="ChEBI" id="CHEBI:58349"/>
        <dbReference type="ChEBI" id="CHEBI:68483"/>
        <dbReference type="ChEBI" id="CHEBI:70757"/>
        <dbReference type="EC" id="1.3.1.98"/>
    </reaction>
</comment>
<comment type="cofactor">
    <cofactor evidence="1">
        <name>FAD</name>
        <dbReference type="ChEBI" id="CHEBI:57692"/>
    </cofactor>
</comment>
<comment type="pathway">
    <text evidence="1">Cell wall biogenesis; peptidoglycan biosynthesis.</text>
</comment>
<comment type="subcellular location">
    <subcellularLocation>
        <location evidence="1">Cytoplasm</location>
    </subcellularLocation>
</comment>
<comment type="similarity">
    <text evidence="1">Belongs to the MurB family.</text>
</comment>
<accession>Q1IXV7</accession>
<sequence length="295" mass="31477">MTASSVTSSRTGARVERLPLARFTTLGVGGEAEVWFVDNHEQLAEALEQPYRILGGGSNLVVADEGVPERVIRLTGRLAAADLTPDPDLSSTETVVTGWVGGGVPLPGLIRRLQKLGLSNLEGTVGIPAQVGGAVWMNAGTRYGEMFDGLHTLEIVSPEGMRQVTPDELDWGYRRSGIPRGHVVTRVRLKLRRSTPEAVLAKMALADQARKGQPKMKTPGCAFKNPGGVSAGKLIDEAGLKGTRIGNAMIAPEHGNFIVNLGGASSRDIHALLALIRARVGVPLELEYELWPEQA</sequence>
<gene>
    <name evidence="1" type="primary">murB</name>
    <name type="ordered locus">Dgeo_1632</name>
</gene>
<keyword id="KW-0131">Cell cycle</keyword>
<keyword id="KW-0132">Cell division</keyword>
<keyword id="KW-0133">Cell shape</keyword>
<keyword id="KW-0961">Cell wall biogenesis/degradation</keyword>
<keyword id="KW-0963">Cytoplasm</keyword>
<keyword id="KW-0274">FAD</keyword>
<keyword id="KW-0285">Flavoprotein</keyword>
<keyword id="KW-0521">NADP</keyword>
<keyword id="KW-0560">Oxidoreductase</keyword>
<keyword id="KW-0573">Peptidoglycan synthesis</keyword>
<organism>
    <name type="scientific">Deinococcus geothermalis (strain DSM 11300 / CIP 105573 / AG-3a)</name>
    <dbReference type="NCBI Taxonomy" id="319795"/>
    <lineage>
        <taxon>Bacteria</taxon>
        <taxon>Thermotogati</taxon>
        <taxon>Deinococcota</taxon>
        <taxon>Deinococci</taxon>
        <taxon>Deinococcales</taxon>
        <taxon>Deinococcaceae</taxon>
        <taxon>Deinococcus</taxon>
    </lineage>
</organism>
<proteinExistence type="inferred from homology"/>
<protein>
    <recommendedName>
        <fullName evidence="1">UDP-N-acetylenolpyruvoylglucosamine reductase</fullName>
        <ecNumber evidence="1">1.3.1.98</ecNumber>
    </recommendedName>
    <alternativeName>
        <fullName evidence="1">UDP-N-acetylmuramate dehydrogenase</fullName>
    </alternativeName>
</protein>